<protein>
    <recommendedName>
        <fullName>Mating-type P-specific polypeptide Pi</fullName>
    </recommendedName>
</protein>
<name>MATPI_SCHPM</name>
<sequence>MKRVAVLLKTVMCEFLKCDYNGYDRIISLLRRILTLICTPNLNGLTIKRVIDSMQSLEYIKQTCNFKLQMCISSMAFKRNNALQNCNHYAWCDDHCSDIGRPMTTVRGQCSKCTKPHLMRWLLLHYDNPYPSNSEFYDLSAATGLTRTQLRNWFSNRRR</sequence>
<proteinExistence type="evidence at protein level"/>
<accession>P10842</accession>
<accession>C7U329</accession>
<organism>
    <name type="scientific">Schizosaccharomyces pombe</name>
    <name type="common">Fission yeast</name>
    <dbReference type="NCBI Taxonomy" id="4896"/>
    <lineage>
        <taxon>Eukaryota</taxon>
        <taxon>Fungi</taxon>
        <taxon>Dikarya</taxon>
        <taxon>Ascomycota</taxon>
        <taxon>Taphrinomycotina</taxon>
        <taxon>Schizosaccharomycetes</taxon>
        <taxon>Schizosaccharomycetales</taxon>
        <taxon>Schizosaccharomycetaceae</taxon>
        <taxon>Schizosaccharomyces</taxon>
    </lineage>
</organism>
<reference key="1">
    <citation type="journal article" date="1988" name="EMBO J.">
        <title>Four mating-type genes control sexual differentiation in the fission yeast.</title>
        <authorList>
            <person name="Kelly M."/>
            <person name="Burke J."/>
            <person name="Smith M."/>
            <person name="Klar A."/>
            <person name="Beach D."/>
        </authorList>
    </citation>
    <scope>NUCLEOTIDE SEQUENCE [GENOMIC DNA]</scope>
    <scope>FUNCTION</scope>
    <scope>INDUCTION</scope>
    <source>
        <strain>h90</strain>
    </source>
</reference>
<reference key="2">
    <citation type="submission" date="2009-08" db="EMBL/GenBank/DDBJ databases">
        <authorList>
            <consortium name="The Schizosaccharomyces pombe Genome Sequencing Consortium"/>
            <person name="Wood V."/>
        </authorList>
    </citation>
    <scope>NUCLEOTIDE SEQUENCE [GENOMIC DNA]</scope>
    <source>
        <strain>h90</strain>
    </source>
</reference>
<gene>
    <name type="primary">mat2-Pi</name>
    <name type="synonym">matPi</name>
    <name type="ORF">SPMTR.02</name>
</gene>
<comment type="function">
    <text evidence="2">Mating type proteins are sequence specific DNA-binding proteins that act as master switches in yeast differentiation by controlling gene expression in a cell type-specific fashion. Required for meiosis, but plays no role in conjugation.</text>
</comment>
<comment type="interaction">
    <interactant intactId="EBI-20725367">
        <id>P10842</id>
    </interactant>
    <interactant intactId="EBI-20725384">
        <id>P0CY15</id>
        <label>mat1-Mi</label>
    </interactant>
    <organismsDiffer>true</organismsDiffer>
    <experiments>2</experiments>
</comment>
<comment type="subcellular location">
    <subcellularLocation>
        <location evidence="1">Nucleus</location>
    </subcellularLocation>
</comment>
<comment type="induction">
    <text evidence="2">By nitrogen starvation.</text>
</comment>
<comment type="miscellaneous">
    <text>There are three genetic loci for mating type genes in S.pombe, mat1, mat2-P and mat3-M. Cell type is determined by the alternate allele present in mat1, either P (plus) in a h+ or M (minus) in a h- cell. Mat2-P and mat3-M serve as donor of information that is transposed to mat1 during a switch of mating type.</text>
</comment>
<comment type="similarity">
    <text evidence="3">Belongs to the TALE/M-ATYP homeobox family.</text>
</comment>
<dbReference type="EMBL" id="X07643">
    <property type="protein sequence ID" value="CAA30483.1"/>
    <property type="molecule type" value="Genomic_DNA"/>
</dbReference>
<dbReference type="EMBL" id="FP565355">
    <property type="protein sequence ID" value="CBB12355.1"/>
    <property type="molecule type" value="Genomic_DNA"/>
</dbReference>
<dbReference type="PIR" id="S00556">
    <property type="entry name" value="S00556"/>
</dbReference>
<dbReference type="SMR" id="P10842"/>
<dbReference type="IntAct" id="P10842">
    <property type="interactions" value="1"/>
</dbReference>
<dbReference type="EnsemblFungi" id="SPMTR.02.1">
    <property type="protein sequence ID" value="SPMTR.02.1:pep"/>
    <property type="gene ID" value="SPMTR.02"/>
</dbReference>
<dbReference type="PomBase" id="SPMTR.02">
    <property type="gene designation" value="mat2-Pi"/>
</dbReference>
<dbReference type="VEuPathDB" id="FungiDB:SPMTR.02"/>
<dbReference type="HOGENOM" id="CLU_1653147_0_0_1"/>
<dbReference type="OMA" id="LNCIHIS"/>
<dbReference type="GO" id="GO:0000785">
    <property type="term" value="C:chromatin"/>
    <property type="evidence" value="ECO:0000314"/>
    <property type="project" value="PomBase"/>
</dbReference>
<dbReference type="GO" id="GO:0005634">
    <property type="term" value="C:nucleus"/>
    <property type="evidence" value="ECO:0000269"/>
    <property type="project" value="PomBase"/>
</dbReference>
<dbReference type="GO" id="GO:0062071">
    <property type="term" value="C:Pi Mi complex"/>
    <property type="evidence" value="ECO:0000269"/>
    <property type="project" value="PomBase"/>
</dbReference>
<dbReference type="GO" id="GO:0003677">
    <property type="term" value="F:DNA binding"/>
    <property type="evidence" value="ECO:0007669"/>
    <property type="project" value="UniProtKB-KW"/>
</dbReference>
<dbReference type="GO" id="GO:0001228">
    <property type="term" value="F:DNA-binding transcription activator activity, RNA polymerase II-specific"/>
    <property type="evidence" value="ECO:0000315"/>
    <property type="project" value="PomBase"/>
</dbReference>
<dbReference type="GO" id="GO:0051728">
    <property type="term" value="P:cell cycle switching, mitotic to meiotic cell cycle"/>
    <property type="evidence" value="ECO:0000315"/>
    <property type="project" value="PomBase"/>
</dbReference>
<dbReference type="GO" id="GO:0071444">
    <property type="term" value="P:cellular response to pheromone"/>
    <property type="evidence" value="ECO:0000315"/>
    <property type="project" value="PomBase"/>
</dbReference>
<dbReference type="GO" id="GO:0007531">
    <property type="term" value="P:mating type determination"/>
    <property type="evidence" value="ECO:0000303"/>
    <property type="project" value="PomBase"/>
</dbReference>
<dbReference type="GO" id="GO:0140538">
    <property type="term" value="P:negative regulation of conjugation with zygote"/>
    <property type="evidence" value="ECO:0000315"/>
    <property type="project" value="PomBase"/>
</dbReference>
<dbReference type="GO" id="GO:0051446">
    <property type="term" value="P:positive regulation of meiotic cell cycle"/>
    <property type="evidence" value="ECO:0000315"/>
    <property type="project" value="PomBase"/>
</dbReference>
<dbReference type="GO" id="GO:0045944">
    <property type="term" value="P:positive regulation of transcription by RNA polymerase II"/>
    <property type="evidence" value="ECO:0000314"/>
    <property type="project" value="PomBase"/>
</dbReference>
<dbReference type="GO" id="GO:0034504">
    <property type="term" value="P:protein localization to nucleus"/>
    <property type="evidence" value="ECO:0000315"/>
    <property type="project" value="PomBase"/>
</dbReference>
<dbReference type="GO" id="GO:0110044">
    <property type="term" value="P:regulation of cell cycle switching, mitotic to meiotic cell cycle"/>
    <property type="evidence" value="ECO:0000314"/>
    <property type="project" value="PomBase"/>
</dbReference>
<dbReference type="CDD" id="cd00086">
    <property type="entry name" value="homeodomain"/>
    <property type="match status" value="1"/>
</dbReference>
<dbReference type="Gene3D" id="1.10.10.60">
    <property type="entry name" value="Homeodomain-like"/>
    <property type="match status" value="1"/>
</dbReference>
<dbReference type="InterPro" id="IPR001356">
    <property type="entry name" value="HD"/>
</dbReference>
<dbReference type="InterPro" id="IPR009057">
    <property type="entry name" value="Homeodomain-like_sf"/>
</dbReference>
<dbReference type="InterPro" id="IPR008422">
    <property type="entry name" value="KN_HD"/>
</dbReference>
<dbReference type="InterPro" id="IPR050224">
    <property type="entry name" value="TALE_homeobox"/>
</dbReference>
<dbReference type="PANTHER" id="PTHR11850">
    <property type="entry name" value="HOMEOBOX PROTEIN TRANSCRIPTION FACTORS"/>
    <property type="match status" value="1"/>
</dbReference>
<dbReference type="Pfam" id="PF05920">
    <property type="entry name" value="Homeobox_KN"/>
    <property type="match status" value="1"/>
</dbReference>
<dbReference type="SUPFAM" id="SSF46689">
    <property type="entry name" value="Homeodomain-like"/>
    <property type="match status" value="1"/>
</dbReference>
<dbReference type="PROSITE" id="PS50071">
    <property type="entry name" value="HOMEOBOX_2"/>
    <property type="match status" value="1"/>
</dbReference>
<feature type="chain" id="PRO_0000049409" description="Mating-type P-specific polypeptide Pi">
    <location>
        <begin position="1"/>
        <end position="159"/>
    </location>
</feature>
<feature type="DNA-binding region" description="Homeobox; TALE-type; partial" evidence="1">
    <location>
        <begin position="103"/>
        <end position="159"/>
    </location>
</feature>
<keyword id="KW-0238">DNA-binding</keyword>
<keyword id="KW-0371">Homeobox</keyword>
<keyword id="KW-0539">Nucleus</keyword>
<keyword id="KW-0346">Stress response</keyword>
<evidence type="ECO:0000255" key="1">
    <source>
        <dbReference type="PROSITE-ProRule" id="PRU00108"/>
    </source>
</evidence>
<evidence type="ECO:0000269" key="2">
    <source>
    </source>
</evidence>
<evidence type="ECO:0000305" key="3"/>